<feature type="chain" id="PRO_0000171087" description="Glutaminase-asparaginase">
    <location>
        <begin position="1"/>
        <end position="331"/>
    </location>
</feature>
<feature type="domain" description="Asparaginase/glutaminase" evidence="2">
    <location>
        <begin position="2"/>
        <end position="331"/>
    </location>
</feature>
<feature type="active site" description="Acyl-ester intermediate" evidence="3 4">
    <location>
        <position position="12"/>
    </location>
</feature>
<feature type="binding site" evidence="1">
    <location>
        <position position="59"/>
    </location>
    <ligand>
        <name>substrate</name>
    </ligand>
</feature>
<feature type="binding site" evidence="1">
    <location>
        <begin position="92"/>
        <end position="93"/>
    </location>
    <ligand>
        <name>substrate</name>
    </ligand>
</feature>
<feature type="strand" evidence="6">
    <location>
        <begin position="3"/>
        <end position="8"/>
    </location>
</feature>
<feature type="turn" evidence="6">
    <location>
        <begin position="11"/>
        <end position="13"/>
    </location>
</feature>
<feature type="helix" evidence="6">
    <location>
        <begin position="33"/>
        <end position="37"/>
    </location>
</feature>
<feature type="helix" evidence="6">
    <location>
        <begin position="43"/>
        <end position="46"/>
    </location>
</feature>
<feature type="strand" evidence="6">
    <location>
        <begin position="47"/>
        <end position="52"/>
    </location>
</feature>
<feature type="helix" evidence="6">
    <location>
        <begin position="59"/>
        <end position="61"/>
    </location>
</feature>
<feature type="helix" evidence="6">
    <location>
        <begin position="64"/>
        <end position="78"/>
    </location>
</feature>
<feature type="strand" evidence="6">
    <location>
        <begin position="85"/>
        <end position="89"/>
    </location>
</feature>
<feature type="helix" evidence="6">
    <location>
        <begin position="92"/>
        <end position="94"/>
    </location>
</feature>
<feature type="helix" evidence="6">
    <location>
        <begin position="95"/>
        <end position="105"/>
    </location>
</feature>
<feature type="strand" evidence="6">
    <location>
        <begin position="112"/>
        <end position="115"/>
    </location>
</feature>
<feature type="helix" evidence="6">
    <location>
        <begin position="128"/>
        <end position="139"/>
    </location>
</feature>
<feature type="strand" evidence="6">
    <location>
        <begin position="149"/>
        <end position="153"/>
    </location>
</feature>
<feature type="strand" evidence="6">
    <location>
        <begin position="156"/>
        <end position="159"/>
    </location>
</feature>
<feature type="turn" evidence="6">
    <location>
        <begin position="160"/>
        <end position="162"/>
    </location>
</feature>
<feature type="strand" evidence="6">
    <location>
        <begin position="168"/>
        <end position="170"/>
    </location>
</feature>
<feature type="strand" evidence="6">
    <location>
        <begin position="181"/>
        <end position="185"/>
    </location>
</feature>
<feature type="strand" evidence="6">
    <location>
        <begin position="188"/>
        <end position="191"/>
    </location>
</feature>
<feature type="helix" evidence="6">
    <location>
        <begin position="200"/>
        <end position="202"/>
    </location>
</feature>
<feature type="turn" evidence="6">
    <location>
        <begin position="207"/>
        <end position="209"/>
    </location>
</feature>
<feature type="strand" evidence="6">
    <location>
        <begin position="212"/>
        <end position="214"/>
    </location>
</feature>
<feature type="strand" evidence="6">
    <location>
        <begin position="218"/>
        <end position="222"/>
    </location>
</feature>
<feature type="helix" evidence="6">
    <location>
        <begin position="230"/>
        <end position="236"/>
    </location>
</feature>
<feature type="turn" evidence="6">
    <location>
        <begin position="237"/>
        <end position="239"/>
    </location>
</feature>
<feature type="strand" evidence="6">
    <location>
        <begin position="241"/>
        <end position="248"/>
    </location>
</feature>
<feature type="turn" evidence="6">
    <location>
        <begin position="249"/>
        <end position="251"/>
    </location>
</feature>
<feature type="helix" evidence="6">
    <location>
        <begin position="257"/>
        <end position="266"/>
    </location>
</feature>
<feature type="strand" evidence="6">
    <location>
        <begin position="271"/>
        <end position="278"/>
    </location>
</feature>
<feature type="turn" evidence="6">
    <location>
        <begin position="285"/>
        <end position="287"/>
    </location>
</feature>
<feature type="helix" evidence="6">
    <location>
        <begin position="291"/>
        <end position="294"/>
    </location>
</feature>
<feature type="helix" evidence="6">
    <location>
        <begin position="304"/>
        <end position="314"/>
    </location>
</feature>
<feature type="turn" evidence="6">
    <location>
        <begin position="315"/>
        <end position="317"/>
    </location>
</feature>
<feature type="helix" evidence="6">
    <location>
        <begin position="321"/>
        <end position="328"/>
    </location>
</feature>
<proteinExistence type="evidence at protein level"/>
<dbReference type="EC" id="3.5.1.38"/>
<dbReference type="PIR" id="A28063">
    <property type="entry name" value="A28063"/>
</dbReference>
<dbReference type="PDB" id="1AGX">
    <property type="method" value="X-ray"/>
    <property type="resolution" value="2.90 A"/>
    <property type="chains" value="A=1-331"/>
</dbReference>
<dbReference type="PDBsum" id="1AGX"/>
<dbReference type="SMR" id="P10172"/>
<dbReference type="SABIO-RK" id="P10172"/>
<dbReference type="EvolutionaryTrace" id="P10172"/>
<dbReference type="GO" id="GO:0042597">
    <property type="term" value="C:periplasmic space"/>
    <property type="evidence" value="ECO:0007669"/>
    <property type="project" value="UniProtKB-SubCell"/>
</dbReference>
<dbReference type="GO" id="GO:0004067">
    <property type="term" value="F:asparaginase activity"/>
    <property type="evidence" value="ECO:0007669"/>
    <property type="project" value="InterPro"/>
</dbReference>
<dbReference type="GO" id="GO:0050417">
    <property type="term" value="F:glutamin-(asparagin-)ase activity"/>
    <property type="evidence" value="ECO:0007669"/>
    <property type="project" value="UniProtKB-EC"/>
</dbReference>
<dbReference type="GO" id="GO:0004359">
    <property type="term" value="F:glutaminase activity"/>
    <property type="evidence" value="ECO:0007669"/>
    <property type="project" value="RHEA"/>
</dbReference>
<dbReference type="GO" id="GO:0006528">
    <property type="term" value="P:asparagine metabolic process"/>
    <property type="evidence" value="ECO:0007669"/>
    <property type="project" value="InterPro"/>
</dbReference>
<dbReference type="CDD" id="cd08964">
    <property type="entry name" value="L-asparaginase_II"/>
    <property type="match status" value="1"/>
</dbReference>
<dbReference type="FunFam" id="3.40.50.1170:FF:000001">
    <property type="entry name" value="L-asparaginase 2"/>
    <property type="match status" value="1"/>
</dbReference>
<dbReference type="Gene3D" id="3.40.50.40">
    <property type="match status" value="1"/>
</dbReference>
<dbReference type="Gene3D" id="3.40.50.1170">
    <property type="entry name" value="L-asparaginase, N-terminal domain"/>
    <property type="match status" value="1"/>
</dbReference>
<dbReference type="InterPro" id="IPR004550">
    <property type="entry name" value="AsnASE_II"/>
</dbReference>
<dbReference type="InterPro" id="IPR036152">
    <property type="entry name" value="Asp/glu_Ase-like_sf"/>
</dbReference>
<dbReference type="InterPro" id="IPR006034">
    <property type="entry name" value="Asparaginase/glutaminase-like"/>
</dbReference>
<dbReference type="InterPro" id="IPR020827">
    <property type="entry name" value="Asparaginase/glutaminase_AS1"/>
</dbReference>
<dbReference type="InterPro" id="IPR027475">
    <property type="entry name" value="Asparaginase/glutaminase_AS2"/>
</dbReference>
<dbReference type="InterPro" id="IPR040919">
    <property type="entry name" value="Asparaginase_C"/>
</dbReference>
<dbReference type="InterPro" id="IPR027473">
    <property type="entry name" value="L-asparaginase_C"/>
</dbReference>
<dbReference type="InterPro" id="IPR027474">
    <property type="entry name" value="L-asparaginase_N"/>
</dbReference>
<dbReference type="InterPro" id="IPR037152">
    <property type="entry name" value="L-asparaginase_N_sf"/>
</dbReference>
<dbReference type="NCBIfam" id="TIGR00520">
    <property type="entry name" value="asnASE_II"/>
    <property type="match status" value="1"/>
</dbReference>
<dbReference type="PANTHER" id="PTHR11707:SF28">
    <property type="entry name" value="60 KDA LYSOPHOSPHOLIPASE"/>
    <property type="match status" value="1"/>
</dbReference>
<dbReference type="PANTHER" id="PTHR11707">
    <property type="entry name" value="L-ASPARAGINASE"/>
    <property type="match status" value="1"/>
</dbReference>
<dbReference type="Pfam" id="PF00710">
    <property type="entry name" value="Asparaginase"/>
    <property type="match status" value="1"/>
</dbReference>
<dbReference type="Pfam" id="PF17763">
    <property type="entry name" value="Asparaginase_C"/>
    <property type="match status" value="1"/>
</dbReference>
<dbReference type="PIRSF" id="PIRSF001220">
    <property type="entry name" value="L-ASNase_gatD"/>
    <property type="match status" value="1"/>
</dbReference>
<dbReference type="PIRSF" id="PIRSF500176">
    <property type="entry name" value="L_ASNase"/>
    <property type="match status" value="1"/>
</dbReference>
<dbReference type="PRINTS" id="PR00139">
    <property type="entry name" value="ASNGLNASE"/>
</dbReference>
<dbReference type="SMART" id="SM00870">
    <property type="entry name" value="Asparaginase"/>
    <property type="match status" value="1"/>
</dbReference>
<dbReference type="SUPFAM" id="SSF53774">
    <property type="entry name" value="Glutaminase/Asparaginase"/>
    <property type="match status" value="1"/>
</dbReference>
<dbReference type="PROSITE" id="PS00144">
    <property type="entry name" value="ASN_GLN_ASE_1"/>
    <property type="match status" value="1"/>
</dbReference>
<dbReference type="PROSITE" id="PS00917">
    <property type="entry name" value="ASN_GLN_ASE_2"/>
    <property type="match status" value="1"/>
</dbReference>
<dbReference type="PROSITE" id="PS51732">
    <property type="entry name" value="ASN_GLN_ASE_3"/>
    <property type="match status" value="1"/>
</dbReference>
<keyword id="KW-0002">3D-structure</keyword>
<keyword id="KW-0903">Direct protein sequencing</keyword>
<keyword id="KW-0378">Hydrolase</keyword>
<keyword id="KW-0574">Periplasm</keyword>
<gene>
    <name type="primary">ansB</name>
</gene>
<evidence type="ECO:0000250" key="1"/>
<evidence type="ECO:0000255" key="2">
    <source>
        <dbReference type="PROSITE-ProRule" id="PRU01068"/>
    </source>
</evidence>
<evidence type="ECO:0000255" key="3">
    <source>
        <dbReference type="PROSITE-ProRule" id="PRU10099"/>
    </source>
</evidence>
<evidence type="ECO:0000255" key="4">
    <source>
        <dbReference type="PROSITE-ProRule" id="PRU10100"/>
    </source>
</evidence>
<evidence type="ECO:0000305" key="5"/>
<evidence type="ECO:0007829" key="6">
    <source>
        <dbReference type="PDB" id="1AGX"/>
    </source>
</evidence>
<sequence>KNNVVIVATGGTIAGAGASSTNSATYSAAKVPVDALIKAVPQVNDLANITGIQALQVASESITDKELLSLARQVNDLVKKPSVNGVVITHGTDTMEETAFFLNLVVHTDKPIVLVGSMRPSTALSADGPLNLYSAVALASSNEAKNKGVMVLMNDSIFAARDVTKGINIHTHAFVSQWGALGTLVEGKPYWFRSSVKKHTNNSEFNIEKIQGDALPGVQIVYGSDNMMPDAYQAFAKAGVKAIIHAGTGNGSMANYLVPEVRKLHDEQGLQIVRSSRVAQGFVLRNAEQPDDKYGWIAAHDLNPQKARLLMALALTKTNDAKEIQNMFWNY</sequence>
<reference key="1">
    <citation type="journal article" date="1988" name="J. Biol. Chem.">
        <title>Structures of amidohydrolases. Amino acid sequence of a glutaminase-asparaginase from Acinetobacter glutaminasificans and preliminary crystallographic data for an asparaginase from Erwinia chrysanthemi.</title>
        <authorList>
            <person name="Tanaka S."/>
            <person name="Robinson E.A."/>
            <person name="Appella E."/>
            <person name="Miller M."/>
            <person name="Ammon H.L."/>
            <person name="Roberts J."/>
            <person name="Weber I.T."/>
            <person name="Wlodawer A."/>
        </authorList>
    </citation>
    <scope>PROTEIN SEQUENCE</scope>
</reference>
<reference key="2">
    <citation type="journal article" date="1978" name="Biochemistry">
        <title>Amino acid sequence of the diazooxonorleucine binding site of Acinetobacter and Pseudomonas 7A glutaminase-asparaginase enzymes.</title>
        <authorList>
            <person name="Holcenberg J.S."/>
            <person name="Ericsson L."/>
            <person name="Roberts J."/>
        </authorList>
    </citation>
    <scope>PROTEIN SEQUENCE OF 1-60</scope>
</reference>
<reference key="3">
    <citation type="journal article" date="1994" name="Acta Crystallogr. D">
        <title>Refined crystal structure of Acinetobacter glutaminasificans glutaminase-asparaginase.</title>
        <authorList>
            <person name="Lubkowski J."/>
            <person name="Wlodawer A."/>
            <person name="Housset D."/>
            <person name="Weber I.T."/>
            <person name="Ammon H.L."/>
            <person name="Murphy K.C."/>
            <person name="Swain A.L."/>
        </authorList>
    </citation>
    <scope>X-RAY CRYSTALLOGRAPHY (2.9 ANGSTROMS)</scope>
</reference>
<name>ASPQ_ACIGL</name>
<organism>
    <name type="scientific">Acinetobacter glutaminasificans</name>
    <dbReference type="NCBI Taxonomy" id="474"/>
    <lineage>
        <taxon>Bacteria</taxon>
        <taxon>Pseudomonadati</taxon>
        <taxon>Pseudomonadota</taxon>
        <taxon>Gammaproteobacteria</taxon>
        <taxon>Moraxellales</taxon>
        <taxon>Moraxellaceae</taxon>
        <taxon>Acinetobacter</taxon>
    </lineage>
</organism>
<protein>
    <recommendedName>
        <fullName>Glutaminase-asparaginase</fullName>
        <ecNumber>3.5.1.38</ecNumber>
    </recommendedName>
    <alternativeName>
        <fullName>L-ASNase/L-GLNase</fullName>
    </alternativeName>
    <alternativeName>
        <fullName>L-asparagine/L-glutamine amidohydrolase</fullName>
    </alternativeName>
</protein>
<comment type="catalytic activity">
    <reaction>
        <text>L-glutamine + H2O = L-glutamate + NH4(+)</text>
        <dbReference type="Rhea" id="RHEA:15889"/>
        <dbReference type="ChEBI" id="CHEBI:15377"/>
        <dbReference type="ChEBI" id="CHEBI:28938"/>
        <dbReference type="ChEBI" id="CHEBI:29985"/>
        <dbReference type="ChEBI" id="CHEBI:58359"/>
        <dbReference type="EC" id="3.5.1.38"/>
    </reaction>
</comment>
<comment type="catalytic activity">
    <reaction>
        <text>L-asparagine + H2O = L-aspartate + NH4(+)</text>
        <dbReference type="Rhea" id="RHEA:21016"/>
        <dbReference type="ChEBI" id="CHEBI:15377"/>
        <dbReference type="ChEBI" id="CHEBI:28938"/>
        <dbReference type="ChEBI" id="CHEBI:29991"/>
        <dbReference type="ChEBI" id="CHEBI:58048"/>
        <dbReference type="EC" id="3.5.1.38"/>
    </reaction>
</comment>
<comment type="subunit">
    <text>Homotetramer.</text>
</comment>
<comment type="subcellular location">
    <subcellularLocation>
        <location evidence="1">Periplasm</location>
    </subcellularLocation>
</comment>
<comment type="similarity">
    <text evidence="5">Belongs to the asparaginase 1 family.</text>
</comment>
<accession>P10172</accession>